<evidence type="ECO:0000255" key="1">
    <source>
        <dbReference type="HAMAP-Rule" id="MF_00107"/>
    </source>
</evidence>
<comment type="function">
    <text evidence="1">Involved in the biosynthesis of isopentenyl diphosphate (IPP) and dimethylallyl diphosphate (DMAPP), two major building blocks of isoprenoid compounds. Catalyzes the conversion of 4-diphosphocytidyl-2-C-methyl-D-erythritol 2-phosphate (CDP-ME2P) to 2-C-methyl-D-erythritol 2,4-cyclodiphosphate (ME-CPP) with a corresponding release of cytidine 5-monophosphate (CMP).</text>
</comment>
<comment type="catalytic activity">
    <reaction evidence="1">
        <text>4-CDP-2-C-methyl-D-erythritol 2-phosphate = 2-C-methyl-D-erythritol 2,4-cyclic diphosphate + CMP</text>
        <dbReference type="Rhea" id="RHEA:23864"/>
        <dbReference type="ChEBI" id="CHEBI:57919"/>
        <dbReference type="ChEBI" id="CHEBI:58483"/>
        <dbReference type="ChEBI" id="CHEBI:60377"/>
        <dbReference type="EC" id="4.6.1.12"/>
    </reaction>
</comment>
<comment type="cofactor">
    <cofactor evidence="1">
        <name>a divalent metal cation</name>
        <dbReference type="ChEBI" id="CHEBI:60240"/>
    </cofactor>
    <text evidence="1">Binds 1 divalent metal cation per subunit.</text>
</comment>
<comment type="pathway">
    <text evidence="1">Isoprenoid biosynthesis; isopentenyl diphosphate biosynthesis via DXP pathway; isopentenyl diphosphate from 1-deoxy-D-xylulose 5-phosphate: step 4/6.</text>
</comment>
<comment type="subunit">
    <text evidence="1">Homotrimer.</text>
</comment>
<comment type="similarity">
    <text evidence="1">Belongs to the IspF family.</text>
</comment>
<feature type="chain" id="PRO_0000189499" description="2-C-methyl-D-erythritol 2,4-cyclodiphosphate synthase">
    <location>
        <begin position="1"/>
        <end position="166"/>
    </location>
</feature>
<feature type="binding site" evidence="1">
    <location>
        <begin position="17"/>
        <end position="19"/>
    </location>
    <ligand>
        <name>4-CDP-2-C-methyl-D-erythritol 2-phosphate</name>
        <dbReference type="ChEBI" id="CHEBI:57919"/>
    </ligand>
</feature>
<feature type="binding site" evidence="1">
    <location>
        <position position="17"/>
    </location>
    <ligand>
        <name>a divalent metal cation</name>
        <dbReference type="ChEBI" id="CHEBI:60240"/>
    </ligand>
</feature>
<feature type="binding site" evidence="1">
    <location>
        <position position="19"/>
    </location>
    <ligand>
        <name>a divalent metal cation</name>
        <dbReference type="ChEBI" id="CHEBI:60240"/>
    </ligand>
</feature>
<feature type="binding site" evidence="1">
    <location>
        <begin position="43"/>
        <end position="44"/>
    </location>
    <ligand>
        <name>4-CDP-2-C-methyl-D-erythritol 2-phosphate</name>
        <dbReference type="ChEBI" id="CHEBI:57919"/>
    </ligand>
</feature>
<feature type="binding site" evidence="1">
    <location>
        <position position="51"/>
    </location>
    <ligand>
        <name>a divalent metal cation</name>
        <dbReference type="ChEBI" id="CHEBI:60240"/>
    </ligand>
</feature>
<feature type="binding site" evidence="1">
    <location>
        <begin position="65"/>
        <end position="67"/>
    </location>
    <ligand>
        <name>4-CDP-2-C-methyl-D-erythritol 2-phosphate</name>
        <dbReference type="ChEBI" id="CHEBI:57919"/>
    </ligand>
</feature>
<feature type="binding site" evidence="1">
    <location>
        <begin position="109"/>
        <end position="115"/>
    </location>
    <ligand>
        <name>4-CDP-2-C-methyl-D-erythritol 2-phosphate</name>
        <dbReference type="ChEBI" id="CHEBI:57919"/>
    </ligand>
</feature>
<feature type="binding site" evidence="1">
    <location>
        <position position="151"/>
    </location>
    <ligand>
        <name>4-CDP-2-C-methyl-D-erythritol 2-phosphate</name>
        <dbReference type="ChEBI" id="CHEBI:57919"/>
    </ligand>
</feature>
<feature type="site" description="Transition state stabilizer" evidence="1">
    <location>
        <position position="43"/>
    </location>
</feature>
<feature type="site" description="Transition state stabilizer" evidence="1">
    <location>
        <position position="142"/>
    </location>
</feature>
<gene>
    <name evidence="1" type="primary">ispF</name>
    <name type="ordered locus">RB3451</name>
</gene>
<protein>
    <recommendedName>
        <fullName evidence="1">2-C-methyl-D-erythritol 2,4-cyclodiphosphate synthase</fullName>
        <shortName evidence="1">MECDP-synthase</shortName>
        <shortName evidence="1">MECPP-synthase</shortName>
        <shortName evidence="1">MECPS</shortName>
        <ecNumber evidence="1">4.6.1.12</ecNumber>
    </recommendedName>
</protein>
<dbReference type="EC" id="4.6.1.12" evidence="1"/>
<dbReference type="EMBL" id="BX294138">
    <property type="protein sequence ID" value="CAD73202.1"/>
    <property type="molecule type" value="Genomic_DNA"/>
</dbReference>
<dbReference type="RefSeq" id="NP_865518.1">
    <property type="nucleotide sequence ID" value="NC_005027.1"/>
</dbReference>
<dbReference type="SMR" id="Q7UU80"/>
<dbReference type="FunCoup" id="Q7UU80">
    <property type="interactions" value="326"/>
</dbReference>
<dbReference type="STRING" id="243090.RB3451"/>
<dbReference type="EnsemblBacteria" id="CAD73202">
    <property type="protein sequence ID" value="CAD73202"/>
    <property type="gene ID" value="RB3451"/>
</dbReference>
<dbReference type="KEGG" id="rba:RB3451"/>
<dbReference type="PATRIC" id="fig|243090.15.peg.1595"/>
<dbReference type="eggNOG" id="COG0245">
    <property type="taxonomic scope" value="Bacteria"/>
</dbReference>
<dbReference type="HOGENOM" id="CLU_084630_0_1_0"/>
<dbReference type="InParanoid" id="Q7UU80"/>
<dbReference type="OrthoDB" id="9804336at2"/>
<dbReference type="UniPathway" id="UPA00056">
    <property type="reaction ID" value="UER00095"/>
</dbReference>
<dbReference type="Proteomes" id="UP000001025">
    <property type="component" value="Chromosome"/>
</dbReference>
<dbReference type="GO" id="GO:0008685">
    <property type="term" value="F:2-C-methyl-D-erythritol 2,4-cyclodiphosphate synthase activity"/>
    <property type="evidence" value="ECO:0000318"/>
    <property type="project" value="GO_Central"/>
</dbReference>
<dbReference type="GO" id="GO:0046872">
    <property type="term" value="F:metal ion binding"/>
    <property type="evidence" value="ECO:0007669"/>
    <property type="project" value="UniProtKB-KW"/>
</dbReference>
<dbReference type="GO" id="GO:0019288">
    <property type="term" value="P:isopentenyl diphosphate biosynthetic process, methylerythritol 4-phosphate pathway"/>
    <property type="evidence" value="ECO:0007669"/>
    <property type="project" value="UniProtKB-UniRule"/>
</dbReference>
<dbReference type="GO" id="GO:0016114">
    <property type="term" value="P:terpenoid biosynthetic process"/>
    <property type="evidence" value="ECO:0007669"/>
    <property type="project" value="InterPro"/>
</dbReference>
<dbReference type="CDD" id="cd00554">
    <property type="entry name" value="MECDP_synthase"/>
    <property type="match status" value="1"/>
</dbReference>
<dbReference type="FunFam" id="3.30.1330.50:FF:000009">
    <property type="entry name" value="2-C-methyl-D-erythritol 2,4-cyclodiphosphate synthase"/>
    <property type="match status" value="1"/>
</dbReference>
<dbReference type="Gene3D" id="3.30.1330.50">
    <property type="entry name" value="2-C-methyl-D-erythritol 2,4-cyclodiphosphate synthase"/>
    <property type="match status" value="1"/>
</dbReference>
<dbReference type="HAMAP" id="MF_00107">
    <property type="entry name" value="IspF"/>
    <property type="match status" value="1"/>
</dbReference>
<dbReference type="InterPro" id="IPR003526">
    <property type="entry name" value="MECDP_synthase"/>
</dbReference>
<dbReference type="InterPro" id="IPR020555">
    <property type="entry name" value="MECDP_synthase_CS"/>
</dbReference>
<dbReference type="InterPro" id="IPR036571">
    <property type="entry name" value="MECDP_synthase_sf"/>
</dbReference>
<dbReference type="NCBIfam" id="TIGR00151">
    <property type="entry name" value="ispF"/>
    <property type="match status" value="1"/>
</dbReference>
<dbReference type="PANTHER" id="PTHR43181">
    <property type="entry name" value="2-C-METHYL-D-ERYTHRITOL 2,4-CYCLODIPHOSPHATE SYNTHASE, CHLOROPLASTIC"/>
    <property type="match status" value="1"/>
</dbReference>
<dbReference type="PANTHER" id="PTHR43181:SF1">
    <property type="entry name" value="2-C-METHYL-D-ERYTHRITOL 2,4-CYCLODIPHOSPHATE SYNTHASE, CHLOROPLASTIC"/>
    <property type="match status" value="1"/>
</dbReference>
<dbReference type="Pfam" id="PF02542">
    <property type="entry name" value="YgbB"/>
    <property type="match status" value="1"/>
</dbReference>
<dbReference type="SUPFAM" id="SSF69765">
    <property type="entry name" value="IpsF-like"/>
    <property type="match status" value="1"/>
</dbReference>
<dbReference type="PROSITE" id="PS01350">
    <property type="entry name" value="ISPF"/>
    <property type="match status" value="1"/>
</dbReference>
<reference key="1">
    <citation type="journal article" date="2003" name="Proc. Natl. Acad. Sci. U.S.A.">
        <title>Complete genome sequence of the marine planctomycete Pirellula sp. strain 1.</title>
        <authorList>
            <person name="Gloeckner F.O."/>
            <person name="Kube M."/>
            <person name="Bauer M."/>
            <person name="Teeling H."/>
            <person name="Lombardot T."/>
            <person name="Ludwig W."/>
            <person name="Gade D."/>
            <person name="Beck A."/>
            <person name="Borzym K."/>
            <person name="Heitmann K."/>
            <person name="Rabus R."/>
            <person name="Schlesner H."/>
            <person name="Amann R."/>
            <person name="Reinhardt R."/>
        </authorList>
    </citation>
    <scope>NUCLEOTIDE SEQUENCE [LARGE SCALE GENOMIC DNA]</scope>
    <source>
        <strain>DSM 10527 / NCIMB 13988 / SH1</strain>
    </source>
</reference>
<name>ISPF_RHOBA</name>
<keyword id="KW-0414">Isoprene biosynthesis</keyword>
<keyword id="KW-0456">Lyase</keyword>
<keyword id="KW-0479">Metal-binding</keyword>
<keyword id="KW-1185">Reference proteome</keyword>
<proteinExistence type="inferred from homology"/>
<sequence length="166" mass="17751">MMTQPQPLAFRIGLGYDSHRLGPDGPLRIGGLDVAGDFHAIGHSDADVLLHAVTDALMGAIAGPDIGRLFPDDADENRGRDSRDFVEEALRRVNEAGYEINNVDAVILAQKPKMAPHIDSMRAAVAEMLQTTIEQVGLKAKTGEGVDAVGRSEAIAARAVVMLSRR</sequence>
<organism>
    <name type="scientific">Rhodopirellula baltica (strain DSM 10527 / NCIMB 13988 / SH1)</name>
    <dbReference type="NCBI Taxonomy" id="243090"/>
    <lineage>
        <taxon>Bacteria</taxon>
        <taxon>Pseudomonadati</taxon>
        <taxon>Planctomycetota</taxon>
        <taxon>Planctomycetia</taxon>
        <taxon>Pirellulales</taxon>
        <taxon>Pirellulaceae</taxon>
        <taxon>Rhodopirellula</taxon>
    </lineage>
</organism>
<accession>Q7UU80</accession>